<organism>
    <name type="scientific">Mycobacterium bovis (strain BCG / Pasteur 1173P2)</name>
    <dbReference type="NCBI Taxonomy" id="410289"/>
    <lineage>
        <taxon>Bacteria</taxon>
        <taxon>Bacillati</taxon>
        <taxon>Actinomycetota</taxon>
        <taxon>Actinomycetes</taxon>
        <taxon>Mycobacteriales</taxon>
        <taxon>Mycobacteriaceae</taxon>
        <taxon>Mycobacterium</taxon>
        <taxon>Mycobacterium tuberculosis complex</taxon>
    </lineage>
</organism>
<reference key="1">
    <citation type="journal article" date="2007" name="Proc. Natl. Acad. Sci. U.S.A.">
        <title>Genome plasticity of BCG and impact on vaccine efficacy.</title>
        <authorList>
            <person name="Brosch R."/>
            <person name="Gordon S.V."/>
            <person name="Garnier T."/>
            <person name="Eiglmeier K."/>
            <person name="Frigui W."/>
            <person name="Valenti P."/>
            <person name="Dos Santos S."/>
            <person name="Duthoy S."/>
            <person name="Lacroix C."/>
            <person name="Garcia-Pelayo C."/>
            <person name="Inwald J.K."/>
            <person name="Golby P."/>
            <person name="Garcia J.N."/>
            <person name="Hewinson R.G."/>
            <person name="Behr M.A."/>
            <person name="Quail M.A."/>
            <person name="Churcher C."/>
            <person name="Barrell B.G."/>
            <person name="Parkhill J."/>
            <person name="Cole S.T."/>
        </authorList>
    </citation>
    <scope>NUCLEOTIDE SEQUENCE [LARGE SCALE GENOMIC DNA]</scope>
    <source>
        <strain>BCG / Pasteur 1173P2</strain>
    </source>
</reference>
<protein>
    <recommendedName>
        <fullName evidence="1">DNA-directed RNA polymerase subunit beta'</fullName>
        <shortName evidence="1">RNAP subunit beta'</shortName>
        <ecNumber evidence="1">2.7.7.6</ecNumber>
    </recommendedName>
    <alternativeName>
        <fullName evidence="1">RNA polymerase subunit beta'</fullName>
    </alternativeName>
    <alternativeName>
        <fullName evidence="1">Transcriptase subunit beta'</fullName>
    </alternativeName>
</protein>
<keyword id="KW-0240">DNA-directed RNA polymerase</keyword>
<keyword id="KW-0460">Magnesium</keyword>
<keyword id="KW-0479">Metal-binding</keyword>
<keyword id="KW-0548">Nucleotidyltransferase</keyword>
<keyword id="KW-0804">Transcription</keyword>
<keyword id="KW-0808">Transferase</keyword>
<keyword id="KW-0862">Zinc</keyword>
<gene>
    <name evidence="1" type="primary">rpoC</name>
    <name type="ordered locus">BCG_0717</name>
</gene>
<proteinExistence type="inferred from homology"/>
<sequence>MLDVNFFDELRIGLATAEDIRQWSYGEVKKPETINYRTLKPEKDGLFCEKIFGPTRDWECYCGKYKRVPFKGIICERCGVEVTRAKVRRERMGHIELAAPVTHIWYFKGVPSRLGYLLDLAPKDLEKIIYFAAYVITSVDEEMRHNELSTLEAEMAVERKAVEDQRDGELEARAQKLEADLAELEAEGAKADARRKVRDGGEREMRQIRDRAQRELDRLEDIWSTFTKLAPKQLIVDENLYRELVDRYGEYFTGAMGAESIQKLIENFDIDAEAESLRDVIRNGKGQKKLRALKRLKVVAAFQQSGNSPMGMVLDAVPVIPPELRPMVQLDGGRFATSDLNDLYRRVINRNNRLKRLIDLGAPEIIVNNEKRMLQESVDALFDNGRRGRPVTGPGNRPLKSLSDLLKGKQGRFRQNLLGKRVDYSGRSVIVVGPQLKLHQCGLPKLMALELFKPFVMKRLVDLNHAQNIKSAKRMVERQRPQVWDVLEEVIAEHPVLLNRAPTLHRLGIQAFEPMLVEGKAIQLHPLVCEAFNADFDGDQMAVHLPLSAEAQAEARILMLSSNNILSPASGRPLAMPRLDMVTGLYYLTTEVPGDTGEYQPASGDHPETGVYSSPAEAIMAADRGVLSVRAKIKVRLTQLRPPVEIEAELFGHSGWQPGDAWMAETTLGRVMFNELLPLGYPFVNKQMHKKVQAAIINDLAERYPMIVVAQTVDKLKDAGFYWATRSGVTVSMADVLVPPRKKEILDHYEERADKVEKQFQRGALNHDERNEALVEIWKEATDEVGQALREHYPDDNPIITIVDSGATGNFTQTRTLAGMKGLVTNPKGEFIPRPVKSSFREGLTVLEYFINTHGARKGLADTALRTADSGYLTRRLVDVSQDVIVREHDCQTERGIVVELAERAPDGTLIRDPYIETSAYARTLGTDAVDEAGNVIVERGQDLGDPEIDALLAAGITQVKVRSVLTCATSTGVCATCYGRSMATGKLVDIGEAVGIVAAQSIGEPGTQLTMRTFHQGGVGEDITGGLPRVQELFEARVPRGKAPIADVTGRVRLEDGERFYKITIVPDDGGEEVVYDKISKRQRLRVFKHEDGSERVLSDGDHVEVGQQLMEGSADPHEVLRVQGPREVQIHLVREVQEVYRAQGVSIHDKHIEVIVRQMLRRVTIIDSGSTEFLPGSLIDRAEFEAENRRVVAEGGEPAAGRPVLMGITKASLATDSWLSAASFQETTRVLTDAAINCRSDKLNGLKENVIIGKLIPAGTGINRYRNIAVQPTEEARAAAYTIPSYEDQYYSPDFGAATGAAVPLDDYGYSDYR</sequence>
<feature type="chain" id="PRO_0000308854" description="DNA-directed RNA polymerase subunit beta'">
    <location>
        <begin position="1"/>
        <end position="1316"/>
    </location>
</feature>
<feature type="binding site" evidence="1">
    <location>
        <position position="60"/>
    </location>
    <ligand>
        <name>Zn(2+)</name>
        <dbReference type="ChEBI" id="CHEBI:29105"/>
        <label>1</label>
    </ligand>
</feature>
<feature type="binding site" evidence="1">
    <location>
        <position position="62"/>
    </location>
    <ligand>
        <name>Zn(2+)</name>
        <dbReference type="ChEBI" id="CHEBI:29105"/>
        <label>1</label>
    </ligand>
</feature>
<feature type="binding site" evidence="1">
    <location>
        <position position="75"/>
    </location>
    <ligand>
        <name>Zn(2+)</name>
        <dbReference type="ChEBI" id="CHEBI:29105"/>
        <label>1</label>
    </ligand>
</feature>
<feature type="binding site" evidence="1">
    <location>
        <position position="78"/>
    </location>
    <ligand>
        <name>Zn(2+)</name>
        <dbReference type="ChEBI" id="CHEBI:29105"/>
        <label>1</label>
    </ligand>
</feature>
<feature type="binding site" evidence="1">
    <location>
        <position position="535"/>
    </location>
    <ligand>
        <name>Mg(2+)</name>
        <dbReference type="ChEBI" id="CHEBI:18420"/>
    </ligand>
</feature>
<feature type="binding site" evidence="1">
    <location>
        <position position="537"/>
    </location>
    <ligand>
        <name>Mg(2+)</name>
        <dbReference type="ChEBI" id="CHEBI:18420"/>
    </ligand>
</feature>
<feature type="binding site" evidence="1">
    <location>
        <position position="539"/>
    </location>
    <ligand>
        <name>Mg(2+)</name>
        <dbReference type="ChEBI" id="CHEBI:18420"/>
    </ligand>
</feature>
<feature type="binding site" evidence="1">
    <location>
        <position position="891"/>
    </location>
    <ligand>
        <name>Zn(2+)</name>
        <dbReference type="ChEBI" id="CHEBI:29105"/>
        <label>2</label>
    </ligand>
</feature>
<feature type="binding site" evidence="1">
    <location>
        <position position="968"/>
    </location>
    <ligand>
        <name>Zn(2+)</name>
        <dbReference type="ChEBI" id="CHEBI:29105"/>
        <label>2</label>
    </ligand>
</feature>
<feature type="binding site" evidence="1">
    <location>
        <position position="975"/>
    </location>
    <ligand>
        <name>Zn(2+)</name>
        <dbReference type="ChEBI" id="CHEBI:29105"/>
        <label>2</label>
    </ligand>
</feature>
<feature type="binding site" evidence="1">
    <location>
        <position position="978"/>
    </location>
    <ligand>
        <name>Zn(2+)</name>
        <dbReference type="ChEBI" id="CHEBI:29105"/>
        <label>2</label>
    </ligand>
</feature>
<dbReference type="EC" id="2.7.7.6" evidence="1"/>
<dbReference type="EMBL" id="AM408590">
    <property type="protein sequence ID" value="CAL70703.1"/>
    <property type="molecule type" value="Genomic_DNA"/>
</dbReference>
<dbReference type="RefSeq" id="WP_011799122.1">
    <property type="nucleotide sequence ID" value="NC_008769.1"/>
</dbReference>
<dbReference type="SMR" id="A1KGE8"/>
<dbReference type="KEGG" id="mbb:BCG_0717"/>
<dbReference type="HOGENOM" id="CLU_000524_3_1_11"/>
<dbReference type="Proteomes" id="UP000001472">
    <property type="component" value="Chromosome"/>
</dbReference>
<dbReference type="GO" id="GO:0000428">
    <property type="term" value="C:DNA-directed RNA polymerase complex"/>
    <property type="evidence" value="ECO:0007669"/>
    <property type="project" value="UniProtKB-KW"/>
</dbReference>
<dbReference type="GO" id="GO:0003677">
    <property type="term" value="F:DNA binding"/>
    <property type="evidence" value="ECO:0007669"/>
    <property type="project" value="UniProtKB-UniRule"/>
</dbReference>
<dbReference type="GO" id="GO:0003899">
    <property type="term" value="F:DNA-directed RNA polymerase activity"/>
    <property type="evidence" value="ECO:0007669"/>
    <property type="project" value="UniProtKB-UniRule"/>
</dbReference>
<dbReference type="GO" id="GO:0000287">
    <property type="term" value="F:magnesium ion binding"/>
    <property type="evidence" value="ECO:0007669"/>
    <property type="project" value="UniProtKB-UniRule"/>
</dbReference>
<dbReference type="GO" id="GO:0008270">
    <property type="term" value="F:zinc ion binding"/>
    <property type="evidence" value="ECO:0007669"/>
    <property type="project" value="UniProtKB-UniRule"/>
</dbReference>
<dbReference type="GO" id="GO:0006351">
    <property type="term" value="P:DNA-templated transcription"/>
    <property type="evidence" value="ECO:0007669"/>
    <property type="project" value="UniProtKB-UniRule"/>
</dbReference>
<dbReference type="CDD" id="cd02655">
    <property type="entry name" value="RNAP_beta'_C"/>
    <property type="match status" value="1"/>
</dbReference>
<dbReference type="CDD" id="cd01609">
    <property type="entry name" value="RNAP_beta'_N"/>
    <property type="match status" value="1"/>
</dbReference>
<dbReference type="FunFam" id="1.10.132.30:FF:000003">
    <property type="entry name" value="DNA-directed RNA polymerase subunit beta"/>
    <property type="match status" value="1"/>
</dbReference>
<dbReference type="FunFam" id="1.10.150.390:FF:000002">
    <property type="entry name" value="DNA-directed RNA polymerase subunit beta"/>
    <property type="match status" value="1"/>
</dbReference>
<dbReference type="FunFam" id="1.10.274.100:FF:000009">
    <property type="entry name" value="DNA-directed RNA polymerase subunit beta"/>
    <property type="match status" value="1"/>
</dbReference>
<dbReference type="FunFam" id="1.10.40.90:FF:000001">
    <property type="entry name" value="DNA-directed RNA polymerase subunit beta"/>
    <property type="match status" value="1"/>
</dbReference>
<dbReference type="FunFam" id="4.10.860.120:FF:000001">
    <property type="entry name" value="DNA-directed RNA polymerase subunit beta"/>
    <property type="match status" value="1"/>
</dbReference>
<dbReference type="Gene3D" id="1.10.132.30">
    <property type="match status" value="1"/>
</dbReference>
<dbReference type="Gene3D" id="1.10.150.390">
    <property type="match status" value="1"/>
</dbReference>
<dbReference type="Gene3D" id="1.10.1790.20">
    <property type="match status" value="1"/>
</dbReference>
<dbReference type="Gene3D" id="1.10.40.90">
    <property type="match status" value="1"/>
</dbReference>
<dbReference type="Gene3D" id="2.40.40.20">
    <property type="match status" value="1"/>
</dbReference>
<dbReference type="Gene3D" id="2.40.50.100">
    <property type="match status" value="1"/>
</dbReference>
<dbReference type="Gene3D" id="4.10.860.120">
    <property type="entry name" value="RNA polymerase II, clamp domain"/>
    <property type="match status" value="1"/>
</dbReference>
<dbReference type="Gene3D" id="1.10.274.100">
    <property type="entry name" value="RNA polymerase Rpb1, domain 3"/>
    <property type="match status" value="1"/>
</dbReference>
<dbReference type="HAMAP" id="MF_01322">
    <property type="entry name" value="RNApol_bact_RpoC"/>
    <property type="match status" value="1"/>
</dbReference>
<dbReference type="InterPro" id="IPR045867">
    <property type="entry name" value="DNA-dir_RpoC_beta_prime"/>
</dbReference>
<dbReference type="InterPro" id="IPR012754">
    <property type="entry name" value="DNA-dir_RpoC_beta_prime_bact"/>
</dbReference>
<dbReference type="InterPro" id="IPR000722">
    <property type="entry name" value="RNA_pol_asu"/>
</dbReference>
<dbReference type="InterPro" id="IPR006592">
    <property type="entry name" value="RNA_pol_N"/>
</dbReference>
<dbReference type="InterPro" id="IPR007080">
    <property type="entry name" value="RNA_pol_Rpb1_1"/>
</dbReference>
<dbReference type="InterPro" id="IPR007066">
    <property type="entry name" value="RNA_pol_Rpb1_3"/>
</dbReference>
<dbReference type="InterPro" id="IPR042102">
    <property type="entry name" value="RNA_pol_Rpb1_3_sf"/>
</dbReference>
<dbReference type="InterPro" id="IPR007083">
    <property type="entry name" value="RNA_pol_Rpb1_4"/>
</dbReference>
<dbReference type="InterPro" id="IPR007081">
    <property type="entry name" value="RNA_pol_Rpb1_5"/>
</dbReference>
<dbReference type="InterPro" id="IPR044893">
    <property type="entry name" value="RNA_pol_Rpb1_clamp_domain"/>
</dbReference>
<dbReference type="InterPro" id="IPR038120">
    <property type="entry name" value="Rpb1_funnel_sf"/>
</dbReference>
<dbReference type="NCBIfam" id="NF011498">
    <property type="entry name" value="PRK14906.1"/>
    <property type="match status" value="1"/>
</dbReference>
<dbReference type="NCBIfam" id="TIGR02386">
    <property type="entry name" value="rpoC_TIGR"/>
    <property type="match status" value="1"/>
</dbReference>
<dbReference type="PANTHER" id="PTHR19376">
    <property type="entry name" value="DNA-DIRECTED RNA POLYMERASE"/>
    <property type="match status" value="1"/>
</dbReference>
<dbReference type="PANTHER" id="PTHR19376:SF54">
    <property type="entry name" value="DNA-DIRECTED RNA POLYMERASE SUBUNIT BETA"/>
    <property type="match status" value="1"/>
</dbReference>
<dbReference type="Pfam" id="PF04997">
    <property type="entry name" value="RNA_pol_Rpb1_1"/>
    <property type="match status" value="1"/>
</dbReference>
<dbReference type="Pfam" id="PF00623">
    <property type="entry name" value="RNA_pol_Rpb1_2"/>
    <property type="match status" value="1"/>
</dbReference>
<dbReference type="Pfam" id="PF04983">
    <property type="entry name" value="RNA_pol_Rpb1_3"/>
    <property type="match status" value="1"/>
</dbReference>
<dbReference type="Pfam" id="PF05000">
    <property type="entry name" value="RNA_pol_Rpb1_4"/>
    <property type="match status" value="1"/>
</dbReference>
<dbReference type="Pfam" id="PF04998">
    <property type="entry name" value="RNA_pol_Rpb1_5"/>
    <property type="match status" value="1"/>
</dbReference>
<dbReference type="SMART" id="SM00663">
    <property type="entry name" value="RPOLA_N"/>
    <property type="match status" value="1"/>
</dbReference>
<dbReference type="SUPFAM" id="SSF64484">
    <property type="entry name" value="beta and beta-prime subunits of DNA dependent RNA-polymerase"/>
    <property type="match status" value="1"/>
</dbReference>
<accession>A1KGE8</accession>
<evidence type="ECO:0000255" key="1">
    <source>
        <dbReference type="HAMAP-Rule" id="MF_01322"/>
    </source>
</evidence>
<comment type="function">
    <text evidence="1">DNA-dependent RNA polymerase catalyzes the transcription of DNA into RNA using the four ribonucleoside triphosphates as substrates.</text>
</comment>
<comment type="catalytic activity">
    <reaction evidence="1">
        <text>RNA(n) + a ribonucleoside 5'-triphosphate = RNA(n+1) + diphosphate</text>
        <dbReference type="Rhea" id="RHEA:21248"/>
        <dbReference type="Rhea" id="RHEA-COMP:14527"/>
        <dbReference type="Rhea" id="RHEA-COMP:17342"/>
        <dbReference type="ChEBI" id="CHEBI:33019"/>
        <dbReference type="ChEBI" id="CHEBI:61557"/>
        <dbReference type="ChEBI" id="CHEBI:140395"/>
        <dbReference type="EC" id="2.7.7.6"/>
    </reaction>
</comment>
<comment type="cofactor">
    <cofactor evidence="1">
        <name>Mg(2+)</name>
        <dbReference type="ChEBI" id="CHEBI:18420"/>
    </cofactor>
    <text evidence="1">Binds 1 Mg(2+) ion per subunit.</text>
</comment>
<comment type="cofactor">
    <cofactor evidence="1">
        <name>Zn(2+)</name>
        <dbReference type="ChEBI" id="CHEBI:29105"/>
    </cofactor>
    <text evidence="1">Binds 2 Zn(2+) ions per subunit.</text>
</comment>
<comment type="subunit">
    <text evidence="1">The RNAP catalytic core consists of 2 alpha, 1 beta, 1 beta' and 1 omega subunit. When a sigma factor is associated with the core the holoenzyme is formed, which can initiate transcription.</text>
</comment>
<comment type="similarity">
    <text evidence="1">Belongs to the RNA polymerase beta' chain family.</text>
</comment>
<name>RPOC_MYCBP</name>